<organism>
    <name type="scientific">Mycobacterium tuberculosis (strain CDC 1551 / Oshkosh)</name>
    <dbReference type="NCBI Taxonomy" id="83331"/>
    <lineage>
        <taxon>Bacteria</taxon>
        <taxon>Bacillati</taxon>
        <taxon>Actinomycetota</taxon>
        <taxon>Actinomycetes</taxon>
        <taxon>Mycobacteriales</taxon>
        <taxon>Mycobacteriaceae</taxon>
        <taxon>Mycobacterium</taxon>
        <taxon>Mycobacterium tuberculosis complex</taxon>
    </lineage>
</organism>
<evidence type="ECO:0000250" key="1"/>
<evidence type="ECO:0000305" key="2"/>
<gene>
    <name type="primary">leuB</name>
    <name type="ordered locus">MT3073</name>
</gene>
<comment type="function">
    <text evidence="1">Catalyzes the oxidation of 3-carboxy-2-hydroxy-4-methylpentanoate (3-isopropylmalate) to 3-carboxy-4-methyl-2-oxopentanoate. The product decarboxylates to 4-methyl-2 oxopentanoate (By similarity).</text>
</comment>
<comment type="catalytic activity">
    <reaction>
        <text>(2R,3S)-3-isopropylmalate + NAD(+) = 4-methyl-2-oxopentanoate + CO2 + NADH</text>
        <dbReference type="Rhea" id="RHEA:32271"/>
        <dbReference type="ChEBI" id="CHEBI:16526"/>
        <dbReference type="ChEBI" id="CHEBI:17865"/>
        <dbReference type="ChEBI" id="CHEBI:35121"/>
        <dbReference type="ChEBI" id="CHEBI:57540"/>
        <dbReference type="ChEBI" id="CHEBI:57945"/>
        <dbReference type="EC" id="1.1.1.85"/>
    </reaction>
</comment>
<comment type="cofactor">
    <cofactor evidence="1">
        <name>Mg(2+)</name>
        <dbReference type="ChEBI" id="CHEBI:18420"/>
    </cofactor>
    <cofactor evidence="1">
        <name>Mn(2+)</name>
        <dbReference type="ChEBI" id="CHEBI:29035"/>
    </cofactor>
    <text evidence="1">Binds 1 Mg(2+) or Mn(2+) ion per subunit.</text>
</comment>
<comment type="pathway">
    <text>Amino-acid biosynthesis; L-leucine biosynthesis; L-leucine from 3-methyl-2-oxobutanoate: step 3/4.</text>
</comment>
<comment type="subunit">
    <text evidence="1">Homodimer.</text>
</comment>
<comment type="subcellular location">
    <subcellularLocation>
        <location evidence="1">Cytoplasm</location>
    </subcellularLocation>
</comment>
<comment type="similarity">
    <text evidence="2">Belongs to the isocitrate and isopropylmalate dehydrogenases family. LeuB type 2 subfamily.</text>
</comment>
<name>LEU3_MYCTO</name>
<sequence>MKLAIIAGDGIGPEVTAEAVKVLDAVVPGVQKTSYDLGARRFHATGEVLPDSVVAELRNHDAILLGAIGDPSVPSGVLERGLLLRLRFELDHHINLRPARLYPGVASPLSGNPGIDFVVVREGTEGPYTGNGGAIRVGTPNEVATEVSVNTAFGVRRVVADAFERARRRRKHLTLVHKTNVLTFAGGLWLRTVDEVGECYPDVEVAYQHVDAATIHMITDPGRFDVIVTDNLFGDIITDLAAAVCGGIGLAASGNIDATRANPSMFEPVHGSAPDIAGQGIADPTAAIMSVALLLSHLGEHDAAARVDRAVEAHLATRGSERLATSDVGERIAAAL</sequence>
<protein>
    <recommendedName>
        <fullName>3-isopropylmalate dehydrogenase</fullName>
        <ecNumber>1.1.1.85</ecNumber>
    </recommendedName>
    <alternativeName>
        <fullName>3-IPM-DH</fullName>
    </alternativeName>
    <alternativeName>
        <fullName>Beta-IPM dehydrogenase</fullName>
        <shortName>IMDH</shortName>
    </alternativeName>
</protein>
<reference key="1">
    <citation type="journal article" date="2002" name="J. Bacteriol.">
        <title>Whole-genome comparison of Mycobacterium tuberculosis clinical and laboratory strains.</title>
        <authorList>
            <person name="Fleischmann R.D."/>
            <person name="Alland D."/>
            <person name="Eisen J.A."/>
            <person name="Carpenter L."/>
            <person name="White O."/>
            <person name="Peterson J.D."/>
            <person name="DeBoy R.T."/>
            <person name="Dodson R.J."/>
            <person name="Gwinn M.L."/>
            <person name="Haft D.H."/>
            <person name="Hickey E.K."/>
            <person name="Kolonay J.F."/>
            <person name="Nelson W.C."/>
            <person name="Umayam L.A."/>
            <person name="Ermolaeva M.D."/>
            <person name="Salzberg S.L."/>
            <person name="Delcher A."/>
            <person name="Utterback T.R."/>
            <person name="Weidman J.F."/>
            <person name="Khouri H.M."/>
            <person name="Gill J."/>
            <person name="Mikula A."/>
            <person name="Bishai W."/>
            <person name="Jacobs W.R. Jr."/>
            <person name="Venter J.C."/>
            <person name="Fraser C.M."/>
        </authorList>
    </citation>
    <scope>NUCLEOTIDE SEQUENCE [LARGE SCALE GENOMIC DNA]</scope>
    <source>
        <strain>CDC 1551 / Oshkosh</strain>
    </source>
</reference>
<feature type="chain" id="PRO_0000427636" description="3-isopropylmalate dehydrogenase">
    <location>
        <begin position="1"/>
        <end position="336"/>
    </location>
</feature>
<feature type="binding site" evidence="1">
    <location>
        <position position="87"/>
    </location>
    <ligand>
        <name>substrate</name>
    </ligand>
</feature>
<feature type="binding site" evidence="1">
    <location>
        <position position="97"/>
    </location>
    <ligand>
        <name>substrate</name>
    </ligand>
</feature>
<feature type="binding site" evidence="1">
    <location>
        <position position="121"/>
    </location>
    <ligand>
        <name>substrate</name>
    </ligand>
</feature>
<feature type="binding site" evidence="1">
    <location>
        <position position="211"/>
    </location>
    <ligand>
        <name>Mg(2+)</name>
        <dbReference type="ChEBI" id="CHEBI:18420"/>
    </ligand>
</feature>
<feature type="binding site" evidence="1">
    <location>
        <position position="211"/>
    </location>
    <ligand>
        <name>substrate</name>
    </ligand>
</feature>
<feature type="binding site" evidence="1">
    <location>
        <position position="235"/>
    </location>
    <ligand>
        <name>Mg(2+)</name>
        <dbReference type="ChEBI" id="CHEBI:18420"/>
    </ligand>
</feature>
<feature type="binding site" evidence="1">
    <location>
        <position position="239"/>
    </location>
    <ligand>
        <name>Mg(2+)</name>
        <dbReference type="ChEBI" id="CHEBI:18420"/>
    </ligand>
</feature>
<feature type="binding site" evidence="1">
    <location>
        <begin position="271"/>
        <end position="283"/>
    </location>
    <ligand>
        <name>NAD(+)</name>
        <dbReference type="ChEBI" id="CHEBI:57540"/>
    </ligand>
</feature>
<feature type="site" description="Important for catalysis" evidence="1">
    <location>
        <position position="128"/>
    </location>
</feature>
<feature type="site" description="Important for catalysis" evidence="1">
    <location>
        <position position="178"/>
    </location>
</feature>
<keyword id="KW-0028">Amino-acid biosynthesis</keyword>
<keyword id="KW-0100">Branched-chain amino acid biosynthesis</keyword>
<keyword id="KW-0963">Cytoplasm</keyword>
<keyword id="KW-0432">Leucine biosynthesis</keyword>
<keyword id="KW-0460">Magnesium</keyword>
<keyword id="KW-0464">Manganese</keyword>
<keyword id="KW-0479">Metal-binding</keyword>
<keyword id="KW-0520">NAD</keyword>
<keyword id="KW-0560">Oxidoreductase</keyword>
<keyword id="KW-1185">Reference proteome</keyword>
<accession>P9WKK8</accession>
<accession>L0TB88</accession>
<accession>P95313</accession>
<dbReference type="EC" id="1.1.1.85"/>
<dbReference type="EMBL" id="AE000516">
    <property type="protein sequence ID" value="AAK47402.1"/>
    <property type="molecule type" value="Genomic_DNA"/>
</dbReference>
<dbReference type="PIR" id="F70854">
    <property type="entry name" value="F70854"/>
</dbReference>
<dbReference type="RefSeq" id="WP_003899576.1">
    <property type="nucleotide sequence ID" value="NZ_KK341227.1"/>
</dbReference>
<dbReference type="SMR" id="P9WKK8"/>
<dbReference type="KEGG" id="mtc:MT3073"/>
<dbReference type="PATRIC" id="fig|83331.31.peg.3315"/>
<dbReference type="HOGENOM" id="CLU_031953_0_1_11"/>
<dbReference type="UniPathway" id="UPA00048">
    <property type="reaction ID" value="UER00072"/>
</dbReference>
<dbReference type="Proteomes" id="UP000001020">
    <property type="component" value="Chromosome"/>
</dbReference>
<dbReference type="GO" id="GO:0005737">
    <property type="term" value="C:cytoplasm"/>
    <property type="evidence" value="ECO:0007669"/>
    <property type="project" value="UniProtKB-SubCell"/>
</dbReference>
<dbReference type="GO" id="GO:0003862">
    <property type="term" value="F:3-isopropylmalate dehydrogenase activity"/>
    <property type="evidence" value="ECO:0007669"/>
    <property type="project" value="UniProtKB-UniRule"/>
</dbReference>
<dbReference type="GO" id="GO:0000287">
    <property type="term" value="F:magnesium ion binding"/>
    <property type="evidence" value="ECO:0007669"/>
    <property type="project" value="InterPro"/>
</dbReference>
<dbReference type="GO" id="GO:0051287">
    <property type="term" value="F:NAD binding"/>
    <property type="evidence" value="ECO:0007669"/>
    <property type="project" value="InterPro"/>
</dbReference>
<dbReference type="GO" id="GO:0009098">
    <property type="term" value="P:L-leucine biosynthetic process"/>
    <property type="evidence" value="ECO:0007669"/>
    <property type="project" value="UniProtKB-UniRule"/>
</dbReference>
<dbReference type="FunFam" id="3.40.718.10:FF:000026">
    <property type="entry name" value="3-isopropylmalate dehydrogenase"/>
    <property type="match status" value="1"/>
</dbReference>
<dbReference type="Gene3D" id="3.40.718.10">
    <property type="entry name" value="Isopropylmalate Dehydrogenase"/>
    <property type="match status" value="1"/>
</dbReference>
<dbReference type="HAMAP" id="MF_01035">
    <property type="entry name" value="LeuB_type2"/>
    <property type="match status" value="1"/>
</dbReference>
<dbReference type="InterPro" id="IPR050501">
    <property type="entry name" value="ICDH/IPMDH"/>
</dbReference>
<dbReference type="InterPro" id="IPR019818">
    <property type="entry name" value="IsoCit/isopropylmalate_DH_CS"/>
</dbReference>
<dbReference type="InterPro" id="IPR024084">
    <property type="entry name" value="IsoPropMal-DH-like_dom"/>
</dbReference>
<dbReference type="InterPro" id="IPR023698">
    <property type="entry name" value="LeuB_actb"/>
</dbReference>
<dbReference type="NCBIfam" id="NF002898">
    <property type="entry name" value="PRK03437.1"/>
    <property type="match status" value="1"/>
</dbReference>
<dbReference type="PANTHER" id="PTHR43275">
    <property type="entry name" value="D-MALATE DEHYDROGENASE [DECARBOXYLATING]"/>
    <property type="match status" value="1"/>
</dbReference>
<dbReference type="PANTHER" id="PTHR43275:SF1">
    <property type="entry name" value="D-MALATE DEHYDROGENASE [DECARBOXYLATING]"/>
    <property type="match status" value="1"/>
</dbReference>
<dbReference type="Pfam" id="PF00180">
    <property type="entry name" value="Iso_dh"/>
    <property type="match status" value="1"/>
</dbReference>
<dbReference type="SMART" id="SM01329">
    <property type="entry name" value="Iso_dh"/>
    <property type="match status" value="1"/>
</dbReference>
<dbReference type="SUPFAM" id="SSF53659">
    <property type="entry name" value="Isocitrate/Isopropylmalate dehydrogenase-like"/>
    <property type="match status" value="1"/>
</dbReference>
<dbReference type="PROSITE" id="PS00470">
    <property type="entry name" value="IDH_IMDH"/>
    <property type="match status" value="1"/>
</dbReference>
<proteinExistence type="inferred from homology"/>